<feature type="initiator methionine" description="Removed" evidence="1">
    <location>
        <position position="1"/>
    </location>
</feature>
<feature type="chain" id="PRO_0000115573" description="Small ribosomal subunit protein uS15">
    <location>
        <begin position="2"/>
        <end position="89"/>
    </location>
</feature>
<feature type="helix" evidence="5">
    <location>
        <begin position="5"/>
        <end position="15"/>
    </location>
</feature>
<feature type="strand" evidence="4">
    <location>
        <begin position="17"/>
        <end position="20"/>
    </location>
</feature>
<feature type="helix" evidence="5">
    <location>
        <begin position="25"/>
        <end position="43"/>
    </location>
</feature>
<feature type="helix" evidence="5">
    <location>
        <begin position="50"/>
        <end position="73"/>
    </location>
</feature>
<feature type="helix" evidence="5">
    <location>
        <begin position="75"/>
        <end position="85"/>
    </location>
</feature>
<keyword id="KW-0002">3D-structure</keyword>
<keyword id="KW-0687">Ribonucleoprotein</keyword>
<keyword id="KW-0689">Ribosomal protein</keyword>
<keyword id="KW-0694">RNA-binding</keyword>
<keyword id="KW-0699">rRNA-binding</keyword>
<organism>
    <name type="scientific">Thermus thermophilus (strain ATCC BAA-163 / DSM 7039 / HB27)</name>
    <dbReference type="NCBI Taxonomy" id="262724"/>
    <lineage>
        <taxon>Bacteria</taxon>
        <taxon>Thermotogati</taxon>
        <taxon>Deinococcota</taxon>
        <taxon>Deinococci</taxon>
        <taxon>Thermales</taxon>
        <taxon>Thermaceae</taxon>
        <taxon>Thermus</taxon>
    </lineage>
</organism>
<reference key="1">
    <citation type="journal article" date="2004" name="Nat. Biotechnol.">
        <title>The genome sequence of the extreme thermophile Thermus thermophilus.</title>
        <authorList>
            <person name="Henne A."/>
            <person name="Brueggemann H."/>
            <person name="Raasch C."/>
            <person name="Wiezer A."/>
            <person name="Hartsch T."/>
            <person name="Liesegang H."/>
            <person name="Johann A."/>
            <person name="Lienard T."/>
            <person name="Gohl O."/>
            <person name="Martinez-Arias R."/>
            <person name="Jacobi C."/>
            <person name="Starkuviene V."/>
            <person name="Schlenczeck S."/>
            <person name="Dencker S."/>
            <person name="Huber R."/>
            <person name="Klenk H.-P."/>
            <person name="Kramer W."/>
            <person name="Merkl R."/>
            <person name="Gottschalk G."/>
            <person name="Fritz H.-J."/>
        </authorList>
    </citation>
    <scope>NUCLEOTIDE SEQUENCE [LARGE SCALE GENOMIC DNA]</scope>
    <source>
        <strain>ATCC BAA-163 / DSM 7039 / HB27</strain>
    </source>
</reference>
<gene>
    <name evidence="2" type="primary">rpsO</name>
    <name evidence="2" type="synonym">rps15</name>
    <name type="ordered locus">TT_C0773</name>
</gene>
<dbReference type="EMBL" id="AE017221">
    <property type="protein sequence ID" value="AAS81119.1"/>
    <property type="molecule type" value="Genomic_DNA"/>
</dbReference>
<dbReference type="RefSeq" id="WP_008632621.1">
    <property type="nucleotide sequence ID" value="NC_005835.1"/>
</dbReference>
<dbReference type="PDB" id="4KVB">
    <property type="method" value="X-ray"/>
    <property type="resolution" value="4.20 A"/>
    <property type="chains" value="O=1-89"/>
</dbReference>
<dbReference type="PDB" id="4V4G">
    <property type="method" value="X-ray"/>
    <property type="resolution" value="11.50 A"/>
    <property type="chains" value="O=2-89"/>
</dbReference>
<dbReference type="PDB" id="4V4I">
    <property type="method" value="X-ray"/>
    <property type="resolution" value="3.71 A"/>
    <property type="chains" value="p=1-89"/>
</dbReference>
<dbReference type="PDB" id="4V4J">
    <property type="method" value="X-ray"/>
    <property type="resolution" value="3.83 A"/>
    <property type="chains" value="p=1-89"/>
</dbReference>
<dbReference type="PDB" id="4V63">
    <property type="method" value="X-ray"/>
    <property type="resolution" value="3.21 A"/>
    <property type="chains" value="AO/CO=1-89"/>
</dbReference>
<dbReference type="PDB" id="4V67">
    <property type="method" value="X-ray"/>
    <property type="resolution" value="3.00 A"/>
    <property type="chains" value="AO/CO=1-89"/>
</dbReference>
<dbReference type="PDB" id="4V7P">
    <property type="method" value="X-ray"/>
    <property type="resolution" value="3.62 A"/>
    <property type="chains" value="AO/DO=2-89"/>
</dbReference>
<dbReference type="PDB" id="4V83">
    <property type="method" value="X-ray"/>
    <property type="resolution" value="3.50 A"/>
    <property type="chains" value="AO/CO=2-89"/>
</dbReference>
<dbReference type="PDB" id="4V84">
    <property type="method" value="X-ray"/>
    <property type="resolution" value="3.40 A"/>
    <property type="chains" value="AO/CO=2-89"/>
</dbReference>
<dbReference type="PDB" id="4V9J">
    <property type="method" value="X-ray"/>
    <property type="resolution" value="3.86 A"/>
    <property type="chains" value="AO/CO=2-89"/>
</dbReference>
<dbReference type="PDB" id="4V9K">
    <property type="method" value="X-ray"/>
    <property type="resolution" value="3.50 A"/>
    <property type="chains" value="AO/CO=2-89"/>
</dbReference>
<dbReference type="PDB" id="4V9L">
    <property type="method" value="X-ray"/>
    <property type="resolution" value="3.50 A"/>
    <property type="chains" value="AO/CO=2-89"/>
</dbReference>
<dbReference type="PDB" id="4V9M">
    <property type="method" value="X-ray"/>
    <property type="resolution" value="4.00 A"/>
    <property type="chains" value="AO/CO=2-89"/>
</dbReference>
<dbReference type="PDB" id="4V9N">
    <property type="method" value="X-ray"/>
    <property type="resolution" value="3.40 A"/>
    <property type="chains" value="AO/CO=2-89"/>
</dbReference>
<dbReference type="PDB" id="4V9Q">
    <property type="method" value="X-ray"/>
    <property type="resolution" value="3.40 A"/>
    <property type="chains" value="BO/DO=2-89"/>
</dbReference>
<dbReference type="PDB" id="4W29">
    <property type="method" value="X-ray"/>
    <property type="resolution" value="3.80 A"/>
    <property type="chains" value="AO/CO=2-89"/>
</dbReference>
<dbReference type="PDB" id="4XEJ">
    <property type="method" value="X-ray"/>
    <property type="resolution" value="3.80 A"/>
    <property type="chains" value="AS15/BS15=2-89"/>
</dbReference>
<dbReference type="PDB" id="5J4D">
    <property type="method" value="X-ray"/>
    <property type="resolution" value="3.10 A"/>
    <property type="chains" value="CD/XA=1-89"/>
</dbReference>
<dbReference type="PDB" id="5V8I">
    <property type="method" value="X-ray"/>
    <property type="resolution" value="3.25 A"/>
    <property type="chains" value="1o/2o=1-89"/>
</dbReference>
<dbReference type="PDB" id="6B4V">
    <property type="method" value="X-ray"/>
    <property type="resolution" value="3.40 A"/>
    <property type="chains" value="BD/XA=1-89"/>
</dbReference>
<dbReference type="PDB" id="6BOH">
    <property type="method" value="X-ray"/>
    <property type="resolution" value="3.40 A"/>
    <property type="chains" value="DD/YA=1-89"/>
</dbReference>
<dbReference type="PDB" id="6BOK">
    <property type="method" value="X-ray"/>
    <property type="resolution" value="3.55 A"/>
    <property type="chains" value="WA/ZC=1-89"/>
</dbReference>
<dbReference type="PDB" id="6N1D">
    <property type="method" value="X-ray"/>
    <property type="resolution" value="3.20 A"/>
    <property type="chains" value="AS15/BS15=2-89"/>
</dbReference>
<dbReference type="PDBsum" id="4KVB"/>
<dbReference type="PDBsum" id="4V4G"/>
<dbReference type="PDBsum" id="4V4I"/>
<dbReference type="PDBsum" id="4V4J"/>
<dbReference type="PDBsum" id="4V63"/>
<dbReference type="PDBsum" id="4V67"/>
<dbReference type="PDBsum" id="4V7P"/>
<dbReference type="PDBsum" id="4V83"/>
<dbReference type="PDBsum" id="4V84"/>
<dbReference type="PDBsum" id="4V9J"/>
<dbReference type="PDBsum" id="4V9K"/>
<dbReference type="PDBsum" id="4V9L"/>
<dbReference type="PDBsum" id="4V9M"/>
<dbReference type="PDBsum" id="4V9N"/>
<dbReference type="PDBsum" id="4V9Q"/>
<dbReference type="PDBsum" id="4W29"/>
<dbReference type="PDBsum" id="4XEJ"/>
<dbReference type="PDBsum" id="5J4D"/>
<dbReference type="PDBsum" id="5V8I"/>
<dbReference type="PDBsum" id="6B4V"/>
<dbReference type="PDBsum" id="6BOH"/>
<dbReference type="PDBsum" id="6BOK"/>
<dbReference type="PDBsum" id="6N1D"/>
<dbReference type="SMR" id="P62657"/>
<dbReference type="IntAct" id="P62657">
    <property type="interactions" value="4"/>
</dbReference>
<dbReference type="GeneID" id="3169463"/>
<dbReference type="KEGG" id="tth:TT_C0773"/>
<dbReference type="eggNOG" id="COG0184">
    <property type="taxonomic scope" value="Bacteria"/>
</dbReference>
<dbReference type="HOGENOM" id="CLU_148518_0_0_0"/>
<dbReference type="OrthoDB" id="9799262at2"/>
<dbReference type="EvolutionaryTrace" id="P62657"/>
<dbReference type="Proteomes" id="UP000000592">
    <property type="component" value="Chromosome"/>
</dbReference>
<dbReference type="GO" id="GO:0022627">
    <property type="term" value="C:cytosolic small ribosomal subunit"/>
    <property type="evidence" value="ECO:0007669"/>
    <property type="project" value="TreeGrafter"/>
</dbReference>
<dbReference type="GO" id="GO:0019843">
    <property type="term" value="F:rRNA binding"/>
    <property type="evidence" value="ECO:0007669"/>
    <property type="project" value="UniProtKB-UniRule"/>
</dbReference>
<dbReference type="GO" id="GO:0003735">
    <property type="term" value="F:structural constituent of ribosome"/>
    <property type="evidence" value="ECO:0007669"/>
    <property type="project" value="InterPro"/>
</dbReference>
<dbReference type="GO" id="GO:0006412">
    <property type="term" value="P:translation"/>
    <property type="evidence" value="ECO:0007669"/>
    <property type="project" value="UniProtKB-UniRule"/>
</dbReference>
<dbReference type="CDD" id="cd00353">
    <property type="entry name" value="Ribosomal_S15p_S13e"/>
    <property type="match status" value="1"/>
</dbReference>
<dbReference type="FunFam" id="1.10.287.10:FF:000002">
    <property type="entry name" value="30S ribosomal protein S15"/>
    <property type="match status" value="1"/>
</dbReference>
<dbReference type="Gene3D" id="6.10.250.3130">
    <property type="match status" value="1"/>
</dbReference>
<dbReference type="Gene3D" id="1.10.287.10">
    <property type="entry name" value="S15/NS1, RNA-binding"/>
    <property type="match status" value="1"/>
</dbReference>
<dbReference type="HAMAP" id="MF_01343_B">
    <property type="entry name" value="Ribosomal_uS15_B"/>
    <property type="match status" value="1"/>
</dbReference>
<dbReference type="InterPro" id="IPR000589">
    <property type="entry name" value="Ribosomal_uS15"/>
</dbReference>
<dbReference type="InterPro" id="IPR005290">
    <property type="entry name" value="Ribosomal_uS15_bac-type"/>
</dbReference>
<dbReference type="InterPro" id="IPR009068">
    <property type="entry name" value="uS15_NS1_RNA-bd_sf"/>
</dbReference>
<dbReference type="NCBIfam" id="TIGR00952">
    <property type="entry name" value="S15_bact"/>
    <property type="match status" value="1"/>
</dbReference>
<dbReference type="PANTHER" id="PTHR23321">
    <property type="entry name" value="RIBOSOMAL PROTEIN S15, BACTERIAL AND ORGANELLAR"/>
    <property type="match status" value="1"/>
</dbReference>
<dbReference type="PANTHER" id="PTHR23321:SF26">
    <property type="entry name" value="SMALL RIBOSOMAL SUBUNIT PROTEIN US15M"/>
    <property type="match status" value="1"/>
</dbReference>
<dbReference type="Pfam" id="PF00312">
    <property type="entry name" value="Ribosomal_S15"/>
    <property type="match status" value="1"/>
</dbReference>
<dbReference type="SMART" id="SM01387">
    <property type="entry name" value="Ribosomal_S15"/>
    <property type="match status" value="1"/>
</dbReference>
<dbReference type="SUPFAM" id="SSF47060">
    <property type="entry name" value="S15/NS1 RNA-binding domain"/>
    <property type="match status" value="1"/>
</dbReference>
<dbReference type="PROSITE" id="PS00362">
    <property type="entry name" value="RIBOSOMAL_S15"/>
    <property type="match status" value="1"/>
</dbReference>
<sequence length="89" mass="10554">MPITKEEKQKVIQEFARFPGDTGSTEVQVALLTLRINRLSEHLKVHKKDHHSHRGLLMMVGQRRRLLRYLQREDPERYRALIEKLGIRG</sequence>
<evidence type="ECO:0000250" key="1"/>
<evidence type="ECO:0000255" key="2">
    <source>
        <dbReference type="HAMAP-Rule" id="MF_01343"/>
    </source>
</evidence>
<evidence type="ECO:0000305" key="3"/>
<evidence type="ECO:0007829" key="4">
    <source>
        <dbReference type="PDB" id="4V63"/>
    </source>
</evidence>
<evidence type="ECO:0007829" key="5">
    <source>
        <dbReference type="PDB" id="4V67"/>
    </source>
</evidence>
<protein>
    <recommendedName>
        <fullName evidence="2">Small ribosomal subunit protein uS15</fullName>
    </recommendedName>
    <alternativeName>
        <fullName evidence="3">30S ribosomal protein S15</fullName>
    </alternativeName>
</protein>
<accession>P62657</accession>
<proteinExistence type="evidence at protein level"/>
<name>RS15_THET2</name>
<comment type="function">
    <text evidence="2">One of the primary rRNA binding proteins, it binds directly to 16S rRNA where it helps nucleate assembly of the platform of the 30S subunit by binding and bridging several RNA helices of the 16S rRNA.</text>
</comment>
<comment type="function">
    <text evidence="2">Forms an intersubunit bridge (bridge B4) with the 23S rRNA of the 50S subunit in the ribosome.</text>
</comment>
<comment type="subunit">
    <text evidence="2">Part of the 30S ribosomal subunit. Forms a bridge to the 50S subunit in the 70S ribosome, contacting the 23S rRNA.</text>
</comment>
<comment type="similarity">
    <text evidence="2">Belongs to the universal ribosomal protein uS15 family.</text>
</comment>